<reference key="1">
    <citation type="journal article" date="2007" name="PLoS Genet.">
        <title>The complete genome sequence of Yersinia pseudotuberculosis IP31758, the causative agent of Far East scarlet-like fever.</title>
        <authorList>
            <person name="Eppinger M."/>
            <person name="Rosovitz M.J."/>
            <person name="Fricke W.F."/>
            <person name="Rasko D.A."/>
            <person name="Kokorina G."/>
            <person name="Fayolle C."/>
            <person name="Lindler L.E."/>
            <person name="Carniel E."/>
            <person name="Ravel J."/>
        </authorList>
    </citation>
    <scope>NUCLEOTIDE SEQUENCE [LARGE SCALE GENOMIC DNA]</scope>
    <source>
        <strain>IP 31758</strain>
    </source>
</reference>
<gene>
    <name evidence="1" type="primary">mutL</name>
    <name type="ordered locus">YpsIP31758_3655</name>
</gene>
<protein>
    <recommendedName>
        <fullName evidence="1">DNA mismatch repair protein MutL</fullName>
    </recommendedName>
</protein>
<name>MUTL_YERP3</name>
<organism>
    <name type="scientific">Yersinia pseudotuberculosis serotype O:1b (strain IP 31758)</name>
    <dbReference type="NCBI Taxonomy" id="349747"/>
    <lineage>
        <taxon>Bacteria</taxon>
        <taxon>Pseudomonadati</taxon>
        <taxon>Pseudomonadota</taxon>
        <taxon>Gammaproteobacteria</taxon>
        <taxon>Enterobacterales</taxon>
        <taxon>Yersiniaceae</taxon>
        <taxon>Yersinia</taxon>
    </lineage>
</organism>
<dbReference type="EMBL" id="CP000720">
    <property type="protein sequence ID" value="ABS46681.1"/>
    <property type="molecule type" value="Genomic_DNA"/>
</dbReference>
<dbReference type="RefSeq" id="WP_012105753.1">
    <property type="nucleotide sequence ID" value="NC_009708.1"/>
</dbReference>
<dbReference type="SMR" id="A7FMY1"/>
<dbReference type="KEGG" id="ypi:YpsIP31758_3655"/>
<dbReference type="HOGENOM" id="CLU_004131_5_1_6"/>
<dbReference type="Proteomes" id="UP000002412">
    <property type="component" value="Chromosome"/>
</dbReference>
<dbReference type="GO" id="GO:0032300">
    <property type="term" value="C:mismatch repair complex"/>
    <property type="evidence" value="ECO:0007669"/>
    <property type="project" value="InterPro"/>
</dbReference>
<dbReference type="GO" id="GO:0005524">
    <property type="term" value="F:ATP binding"/>
    <property type="evidence" value="ECO:0007669"/>
    <property type="project" value="InterPro"/>
</dbReference>
<dbReference type="GO" id="GO:0016887">
    <property type="term" value="F:ATP hydrolysis activity"/>
    <property type="evidence" value="ECO:0007669"/>
    <property type="project" value="InterPro"/>
</dbReference>
<dbReference type="GO" id="GO:0140664">
    <property type="term" value="F:ATP-dependent DNA damage sensor activity"/>
    <property type="evidence" value="ECO:0007669"/>
    <property type="project" value="InterPro"/>
</dbReference>
<dbReference type="GO" id="GO:0030983">
    <property type="term" value="F:mismatched DNA binding"/>
    <property type="evidence" value="ECO:0007669"/>
    <property type="project" value="InterPro"/>
</dbReference>
<dbReference type="GO" id="GO:0006298">
    <property type="term" value="P:mismatch repair"/>
    <property type="evidence" value="ECO:0007669"/>
    <property type="project" value="UniProtKB-UniRule"/>
</dbReference>
<dbReference type="CDD" id="cd16926">
    <property type="entry name" value="HATPase_MutL-MLH-PMS-like"/>
    <property type="match status" value="1"/>
</dbReference>
<dbReference type="CDD" id="cd03482">
    <property type="entry name" value="MutL_Trans_MutL"/>
    <property type="match status" value="1"/>
</dbReference>
<dbReference type="FunFam" id="3.30.230.10:FF:000013">
    <property type="entry name" value="DNA mismatch repair endonuclease MutL"/>
    <property type="match status" value="1"/>
</dbReference>
<dbReference type="FunFam" id="3.30.565.10:FF:000003">
    <property type="entry name" value="DNA mismatch repair endonuclease MutL"/>
    <property type="match status" value="1"/>
</dbReference>
<dbReference type="FunFam" id="3.30.1370.100:FF:000002">
    <property type="entry name" value="DNA mismatch repair protein MutL"/>
    <property type="match status" value="1"/>
</dbReference>
<dbReference type="Gene3D" id="3.30.230.10">
    <property type="match status" value="1"/>
</dbReference>
<dbReference type="Gene3D" id="3.30.565.10">
    <property type="entry name" value="Histidine kinase-like ATPase, C-terminal domain"/>
    <property type="match status" value="1"/>
</dbReference>
<dbReference type="Gene3D" id="3.30.1540.20">
    <property type="entry name" value="MutL, C-terminal domain, dimerisation subdomain"/>
    <property type="match status" value="1"/>
</dbReference>
<dbReference type="Gene3D" id="3.30.1370.100">
    <property type="entry name" value="MutL, C-terminal domain, regulatory subdomain"/>
    <property type="match status" value="1"/>
</dbReference>
<dbReference type="HAMAP" id="MF_00149">
    <property type="entry name" value="DNA_mis_repair"/>
    <property type="match status" value="1"/>
</dbReference>
<dbReference type="InterPro" id="IPR014762">
    <property type="entry name" value="DNA_mismatch_repair_CS"/>
</dbReference>
<dbReference type="InterPro" id="IPR020667">
    <property type="entry name" value="DNA_mismatch_repair_MutL"/>
</dbReference>
<dbReference type="InterPro" id="IPR013507">
    <property type="entry name" value="DNA_mismatch_S5_2-like"/>
</dbReference>
<dbReference type="InterPro" id="IPR036890">
    <property type="entry name" value="HATPase_C_sf"/>
</dbReference>
<dbReference type="InterPro" id="IPR002099">
    <property type="entry name" value="MutL/Mlh/PMS"/>
</dbReference>
<dbReference type="InterPro" id="IPR038973">
    <property type="entry name" value="MutL/Mlh/Pms-like"/>
</dbReference>
<dbReference type="InterPro" id="IPR014790">
    <property type="entry name" value="MutL_C"/>
</dbReference>
<dbReference type="InterPro" id="IPR042120">
    <property type="entry name" value="MutL_C_dimsub"/>
</dbReference>
<dbReference type="InterPro" id="IPR042121">
    <property type="entry name" value="MutL_C_regsub"/>
</dbReference>
<dbReference type="InterPro" id="IPR037198">
    <property type="entry name" value="MutL_C_sf"/>
</dbReference>
<dbReference type="InterPro" id="IPR020568">
    <property type="entry name" value="Ribosomal_Su5_D2-typ_SF"/>
</dbReference>
<dbReference type="InterPro" id="IPR014721">
    <property type="entry name" value="Ribsml_uS5_D2-typ_fold_subgr"/>
</dbReference>
<dbReference type="NCBIfam" id="TIGR00585">
    <property type="entry name" value="mutl"/>
    <property type="match status" value="1"/>
</dbReference>
<dbReference type="NCBIfam" id="NF000948">
    <property type="entry name" value="PRK00095.1-1"/>
    <property type="match status" value="1"/>
</dbReference>
<dbReference type="PANTHER" id="PTHR10073">
    <property type="entry name" value="DNA MISMATCH REPAIR PROTEIN MLH, PMS, MUTL"/>
    <property type="match status" value="1"/>
</dbReference>
<dbReference type="PANTHER" id="PTHR10073:SF12">
    <property type="entry name" value="DNA MISMATCH REPAIR PROTEIN MLH1"/>
    <property type="match status" value="1"/>
</dbReference>
<dbReference type="Pfam" id="PF01119">
    <property type="entry name" value="DNA_mis_repair"/>
    <property type="match status" value="1"/>
</dbReference>
<dbReference type="Pfam" id="PF13589">
    <property type="entry name" value="HATPase_c_3"/>
    <property type="match status" value="1"/>
</dbReference>
<dbReference type="Pfam" id="PF08676">
    <property type="entry name" value="MutL_C"/>
    <property type="match status" value="1"/>
</dbReference>
<dbReference type="SMART" id="SM01340">
    <property type="entry name" value="DNA_mis_repair"/>
    <property type="match status" value="1"/>
</dbReference>
<dbReference type="SMART" id="SM00853">
    <property type="entry name" value="MutL_C"/>
    <property type="match status" value="1"/>
</dbReference>
<dbReference type="SUPFAM" id="SSF55874">
    <property type="entry name" value="ATPase domain of HSP90 chaperone/DNA topoisomerase II/histidine kinase"/>
    <property type="match status" value="1"/>
</dbReference>
<dbReference type="SUPFAM" id="SSF118116">
    <property type="entry name" value="DNA mismatch repair protein MutL"/>
    <property type="match status" value="1"/>
</dbReference>
<dbReference type="SUPFAM" id="SSF54211">
    <property type="entry name" value="Ribosomal protein S5 domain 2-like"/>
    <property type="match status" value="1"/>
</dbReference>
<dbReference type="PROSITE" id="PS00058">
    <property type="entry name" value="DNA_MISMATCH_REPAIR_1"/>
    <property type="match status" value="1"/>
</dbReference>
<keyword id="KW-0227">DNA damage</keyword>
<keyword id="KW-0234">DNA repair</keyword>
<feature type="chain" id="PRO_1000058151" description="DNA mismatch repair protein MutL">
    <location>
        <begin position="1"/>
        <end position="635"/>
    </location>
</feature>
<feature type="region of interest" description="Disordered" evidence="2">
    <location>
        <begin position="359"/>
        <end position="399"/>
    </location>
</feature>
<feature type="compositionally biased region" description="Low complexity" evidence="2">
    <location>
        <begin position="364"/>
        <end position="377"/>
    </location>
</feature>
<feature type="compositionally biased region" description="Basic and acidic residues" evidence="2">
    <location>
        <begin position="378"/>
        <end position="399"/>
    </location>
</feature>
<sequence length="635" mass="70318">MPIQILPPQLANQIAAGEVVERPASVVKELVENSLDAGATRIDIDIERGGAKLIRIRDNGCGISKDDLALALARHATSKISSLEDLEAILSMGFRGEALASISSVSRLILTSRTAEQSEAWQAYAEGRDMAVTIKPAAHPVGSTLEVLDLFYNTPARRKFMRTEKTEFGHIDEVVRRIALARFDVAINLNHNGKLIRQYRAAPDPAQHERRLASICGPAFLQHALAIAWQHGDLNIHGWVADPAASHTLSEMQYCYVNNRMMRDRLINHAIRQAYQDRLNDAQQPAYVLYLDIDPHQVDVNVHPAKHEVRFHQARLVHDFIYQAVTAVLQQTNAPILNISEEGEVDAPRWQQENRVAAGTNKYAQPEAAKSSAAEQAVARERSSARERAAPAYKEDHPYQKQQGELYRQLLQPSAAAKPATSPAAIPASSVSSPSIPVQRITQAEEPLHGDNYSFGRVLTVFPPCYALIEYQGGVALLSLTVAERWLKQAQLSPPEEGLRPQPLLIPLKITLDKNEIAACQNHEKLLITMGIELSVEQGRATLRAVSLPLRQQNLQKLIPELLGYLSQHEEISPDTLATWLARHLGSEHEVWNVSQAIQLLTEVERLCPQLVQSPPAGLLQPIDIKAALATLTHE</sequence>
<proteinExistence type="inferred from homology"/>
<comment type="function">
    <text evidence="1">This protein is involved in the repair of mismatches in DNA. It is required for dam-dependent methyl-directed DNA mismatch repair. May act as a 'molecular matchmaker', a protein that promotes the formation of a stable complex between two or more DNA-binding proteins in an ATP-dependent manner without itself being part of a final effector complex.</text>
</comment>
<comment type="similarity">
    <text evidence="1">Belongs to the DNA mismatch repair MutL/HexB family.</text>
</comment>
<accession>A7FMY1</accession>
<evidence type="ECO:0000255" key="1">
    <source>
        <dbReference type="HAMAP-Rule" id="MF_00149"/>
    </source>
</evidence>
<evidence type="ECO:0000256" key="2">
    <source>
        <dbReference type="SAM" id="MobiDB-lite"/>
    </source>
</evidence>